<feature type="chain" id="PRO_0000134651" description="Orotidine 5'-phosphate decarboxylase">
    <location>
        <begin position="1"/>
        <end position="266"/>
    </location>
</feature>
<feature type="active site" description="Proton donor" evidence="2">
    <location>
        <position position="94"/>
    </location>
</feature>
<feature type="binding site" evidence="1">
    <location>
        <position position="38"/>
    </location>
    <ligand>
        <name>substrate</name>
    </ligand>
</feature>
<feature type="binding site" evidence="1">
    <location>
        <begin position="60"/>
        <end position="62"/>
    </location>
    <ligand>
        <name>substrate</name>
    </ligand>
</feature>
<feature type="binding site" evidence="1">
    <location>
        <begin position="92"/>
        <end position="101"/>
    </location>
    <ligand>
        <name>substrate</name>
    </ligand>
</feature>
<feature type="binding site" evidence="1">
    <location>
        <position position="218"/>
    </location>
    <ligand>
        <name>substrate</name>
    </ligand>
</feature>
<feature type="binding site" evidence="1">
    <location>
        <position position="236"/>
    </location>
    <ligand>
        <name>substrate</name>
    </ligand>
</feature>
<organism>
    <name type="scientific">Candida maltosa</name>
    <name type="common">Yeast</name>
    <dbReference type="NCBI Taxonomy" id="5479"/>
    <lineage>
        <taxon>Eukaryota</taxon>
        <taxon>Fungi</taxon>
        <taxon>Dikarya</taxon>
        <taxon>Ascomycota</taxon>
        <taxon>Saccharomycotina</taxon>
        <taxon>Pichiomycetes</taxon>
        <taxon>Debaryomycetaceae</taxon>
        <taxon>Candida/Lodderomyces clade</taxon>
        <taxon>Candida</taxon>
    </lineage>
</organism>
<comment type="catalytic activity">
    <reaction evidence="2">
        <text>orotidine 5'-phosphate + H(+) = UMP + CO2</text>
        <dbReference type="Rhea" id="RHEA:11596"/>
        <dbReference type="ChEBI" id="CHEBI:15378"/>
        <dbReference type="ChEBI" id="CHEBI:16526"/>
        <dbReference type="ChEBI" id="CHEBI:57538"/>
        <dbReference type="ChEBI" id="CHEBI:57865"/>
        <dbReference type="EC" id="4.1.1.23"/>
    </reaction>
</comment>
<comment type="pathway">
    <text>Pyrimidine metabolism; UMP biosynthesis via de novo pathway; UMP from orotate: step 2/2.</text>
</comment>
<comment type="similarity">
    <text evidence="3">Belongs to the OMP decarboxylase family.</text>
</comment>
<accession>P32430</accession>
<protein>
    <recommendedName>
        <fullName>Orotidine 5'-phosphate decarboxylase</fullName>
        <ecNumber>4.1.1.23</ecNumber>
    </recommendedName>
    <alternativeName>
        <fullName>OMP decarboxylase</fullName>
        <shortName>OMPDCase</shortName>
        <shortName>OMPdecase</shortName>
    </alternativeName>
    <alternativeName>
        <fullName>Uridine 5'-monophosphate synthase</fullName>
        <shortName>UMP synthase</shortName>
    </alternativeName>
</protein>
<proteinExistence type="inferred from homology"/>
<gene>
    <name type="primary">URA3</name>
    <name type="synonym">PYRG</name>
</gene>
<dbReference type="EC" id="4.1.1.23"/>
<dbReference type="EMBL" id="D12720">
    <property type="protein sequence ID" value="BAA02215.1"/>
    <property type="molecule type" value="Genomic_DNA"/>
</dbReference>
<dbReference type="PIR" id="S29791">
    <property type="entry name" value="JS0721"/>
</dbReference>
<dbReference type="SMR" id="P32430"/>
<dbReference type="UniPathway" id="UPA00070">
    <property type="reaction ID" value="UER00120"/>
</dbReference>
<dbReference type="GO" id="GO:0005829">
    <property type="term" value="C:cytosol"/>
    <property type="evidence" value="ECO:0007669"/>
    <property type="project" value="TreeGrafter"/>
</dbReference>
<dbReference type="GO" id="GO:0004590">
    <property type="term" value="F:orotidine-5'-phosphate decarboxylase activity"/>
    <property type="evidence" value="ECO:0007669"/>
    <property type="project" value="UniProtKB-EC"/>
</dbReference>
<dbReference type="GO" id="GO:0006207">
    <property type="term" value="P:'de novo' pyrimidine nucleobase biosynthetic process"/>
    <property type="evidence" value="ECO:0007669"/>
    <property type="project" value="InterPro"/>
</dbReference>
<dbReference type="GO" id="GO:0044205">
    <property type="term" value="P:'de novo' UMP biosynthetic process"/>
    <property type="evidence" value="ECO:0007669"/>
    <property type="project" value="UniProtKB-UniPathway"/>
</dbReference>
<dbReference type="CDD" id="cd04725">
    <property type="entry name" value="OMP_decarboxylase_like"/>
    <property type="match status" value="1"/>
</dbReference>
<dbReference type="FunFam" id="3.20.20.70:FF:000114">
    <property type="entry name" value="Decarboxylase,orotidine phosphate"/>
    <property type="match status" value="1"/>
</dbReference>
<dbReference type="Gene3D" id="3.20.20.70">
    <property type="entry name" value="Aldolase class I"/>
    <property type="match status" value="1"/>
</dbReference>
<dbReference type="InterPro" id="IPR013785">
    <property type="entry name" value="Aldolase_TIM"/>
</dbReference>
<dbReference type="InterPro" id="IPR014732">
    <property type="entry name" value="OMPdecase"/>
</dbReference>
<dbReference type="InterPro" id="IPR018089">
    <property type="entry name" value="OMPdecase_AS"/>
</dbReference>
<dbReference type="InterPro" id="IPR001754">
    <property type="entry name" value="OMPdeCOase_dom"/>
</dbReference>
<dbReference type="InterPro" id="IPR011060">
    <property type="entry name" value="RibuloseP-bd_barrel"/>
</dbReference>
<dbReference type="NCBIfam" id="TIGR01740">
    <property type="entry name" value="pyrF"/>
    <property type="match status" value="1"/>
</dbReference>
<dbReference type="PANTHER" id="PTHR32119">
    <property type="entry name" value="OROTIDINE 5'-PHOSPHATE DECARBOXYLASE"/>
    <property type="match status" value="1"/>
</dbReference>
<dbReference type="PANTHER" id="PTHR32119:SF2">
    <property type="entry name" value="OROTIDINE 5'-PHOSPHATE DECARBOXYLASE"/>
    <property type="match status" value="1"/>
</dbReference>
<dbReference type="Pfam" id="PF00215">
    <property type="entry name" value="OMPdecase"/>
    <property type="match status" value="1"/>
</dbReference>
<dbReference type="SMART" id="SM00934">
    <property type="entry name" value="OMPdecase"/>
    <property type="match status" value="1"/>
</dbReference>
<dbReference type="SUPFAM" id="SSF51366">
    <property type="entry name" value="Ribulose-phoshate binding barrel"/>
    <property type="match status" value="1"/>
</dbReference>
<dbReference type="PROSITE" id="PS00156">
    <property type="entry name" value="OMPDECASE"/>
    <property type="match status" value="1"/>
</dbReference>
<evidence type="ECO:0000250" key="1"/>
<evidence type="ECO:0000255" key="2">
    <source>
        <dbReference type="PROSITE-ProRule" id="PRU10110"/>
    </source>
</evidence>
<evidence type="ECO:0000305" key="3"/>
<sequence>MVSTKTYTTRASTHPSPVAQRLFHLMDTKKANLCASVDVQTTSEFLSLIDKLGPYICLVKTHIDIIDDFSYEGTIVPLLELARKHNFMIFEDRKFADIGNTVKHQYTSGVYKISSWSDITNAHGVTGAGVVDGLKQGALETTKEPRGLLMLAELSSKGSLAYGEYTEKTVEIAKLDKEFVIGFIAQRDMGGHDEGFDWIVMTPGVGLDDKGDGLGQQYRTVDEVVSTGTDVIIVGRGLFGKGRDPEVEGKRYRDAGWNAYLKRTGQ</sequence>
<reference key="1">
    <citation type="journal article" date="1993" name="Curr. Genet.">
        <title>Cloning of the C-URA3 gene and construction of a triple auxotroph (his5, ade1, ura3) as a useful host for the genetic engineering of Candida maltosa.</title>
        <authorList>
            <person name="Ohkuma M."/>
            <person name="Muraoka S."/>
            <person name="Hwang C.W."/>
            <person name="Ohta A."/>
            <person name="Takagi M."/>
        </authorList>
    </citation>
    <scope>NUCLEOTIDE SEQUENCE [GENOMIC DNA]</scope>
    <source>
        <strain>ATCC 28140 / CBS 5611 / IAM 12247 / JCM 1504 / NBRC 1977</strain>
    </source>
</reference>
<name>PYRF_CANMA</name>
<keyword id="KW-0210">Decarboxylase</keyword>
<keyword id="KW-0456">Lyase</keyword>
<keyword id="KW-0665">Pyrimidine biosynthesis</keyword>